<comment type="function">
    <text evidence="1">Transcription repressor.</text>
</comment>
<comment type="subcellular location">
    <subcellularLocation>
        <location evidence="1">Nucleus</location>
    </subcellularLocation>
</comment>
<organism>
    <name type="scientific">Drosophila mojavensis</name>
    <name type="common">Fruit fly</name>
    <dbReference type="NCBI Taxonomy" id="7230"/>
    <lineage>
        <taxon>Eukaryota</taxon>
        <taxon>Metazoa</taxon>
        <taxon>Ecdysozoa</taxon>
        <taxon>Arthropoda</taxon>
        <taxon>Hexapoda</taxon>
        <taxon>Insecta</taxon>
        <taxon>Pterygota</taxon>
        <taxon>Neoptera</taxon>
        <taxon>Endopterygota</taxon>
        <taxon>Diptera</taxon>
        <taxon>Brachycera</taxon>
        <taxon>Muscomorpha</taxon>
        <taxon>Ephydroidea</taxon>
        <taxon>Drosophilidae</taxon>
        <taxon>Drosophila</taxon>
    </lineage>
</organism>
<dbReference type="EMBL" id="CH933807">
    <property type="protein sequence ID" value="EDW12243.1"/>
    <property type="molecule type" value="Genomic_DNA"/>
</dbReference>
<dbReference type="SMR" id="B4KH32"/>
<dbReference type="FunCoup" id="B4KH32">
    <property type="interactions" value="1249"/>
</dbReference>
<dbReference type="EnsemblMetazoa" id="FBtr0168303">
    <property type="protein sequence ID" value="FBpp0166795"/>
    <property type="gene ID" value="FBgn0140322"/>
</dbReference>
<dbReference type="EnsemblMetazoa" id="XM_002002765.4">
    <property type="protein sequence ID" value="XP_002002801.1"/>
    <property type="gene ID" value="LOC6576816"/>
</dbReference>
<dbReference type="GeneID" id="6576816"/>
<dbReference type="KEGG" id="dmo:Dmoj_GI17578"/>
<dbReference type="eggNOG" id="KOG2185">
    <property type="taxonomic scope" value="Eukaryota"/>
</dbReference>
<dbReference type="HOGENOM" id="CLU_040504_1_0_1"/>
<dbReference type="InParanoid" id="B4KH32"/>
<dbReference type="OMA" id="QYTRGIG"/>
<dbReference type="OrthoDB" id="5842926at2759"/>
<dbReference type="PhylomeDB" id="B4KH32"/>
<dbReference type="Proteomes" id="UP000009192">
    <property type="component" value="Unassembled WGS sequence"/>
</dbReference>
<dbReference type="GO" id="GO:0005634">
    <property type="term" value="C:nucleus"/>
    <property type="evidence" value="ECO:0007669"/>
    <property type="project" value="UniProtKB-SubCell"/>
</dbReference>
<dbReference type="GO" id="GO:0001227">
    <property type="term" value="F:DNA-binding transcription repressor activity, RNA polymerase II-specific"/>
    <property type="evidence" value="ECO:0007669"/>
    <property type="project" value="TreeGrafter"/>
</dbReference>
<dbReference type="GO" id="GO:0000978">
    <property type="term" value="F:RNA polymerase II cis-regulatory region sequence-specific DNA binding"/>
    <property type="evidence" value="ECO:0007669"/>
    <property type="project" value="TreeGrafter"/>
</dbReference>
<dbReference type="GO" id="GO:0008270">
    <property type="term" value="F:zinc ion binding"/>
    <property type="evidence" value="ECO:0007669"/>
    <property type="project" value="UniProtKB-KW"/>
</dbReference>
<dbReference type="CDD" id="cd20384">
    <property type="entry name" value="Tudor_ZGPAT"/>
    <property type="match status" value="1"/>
</dbReference>
<dbReference type="Gene3D" id="2.30.30.1190">
    <property type="match status" value="1"/>
</dbReference>
<dbReference type="InterPro" id="IPR000467">
    <property type="entry name" value="G_patch_dom"/>
</dbReference>
<dbReference type="InterPro" id="IPR000571">
    <property type="entry name" value="Znf_CCCH"/>
</dbReference>
<dbReference type="PANTHER" id="PTHR46297">
    <property type="entry name" value="ZINC FINGER CCCH-TYPE WITH G PATCH DOMAIN-CONTAINING PROTEIN"/>
    <property type="match status" value="1"/>
</dbReference>
<dbReference type="PANTHER" id="PTHR46297:SF1">
    <property type="entry name" value="ZINC FINGER CCCH-TYPE WITH G PATCH DOMAIN-CONTAINING PROTEIN"/>
    <property type="match status" value="1"/>
</dbReference>
<dbReference type="Pfam" id="PF01585">
    <property type="entry name" value="G-patch"/>
    <property type="match status" value="1"/>
</dbReference>
<dbReference type="SMART" id="SM00443">
    <property type="entry name" value="G_patch"/>
    <property type="match status" value="1"/>
</dbReference>
<dbReference type="PROSITE" id="PS50174">
    <property type="entry name" value="G_PATCH"/>
    <property type="match status" value="1"/>
</dbReference>
<dbReference type="PROSITE" id="PS50103">
    <property type="entry name" value="ZF_C3H1"/>
    <property type="match status" value="1"/>
</dbReference>
<keyword id="KW-0238">DNA-binding</keyword>
<keyword id="KW-0479">Metal-binding</keyword>
<keyword id="KW-0539">Nucleus</keyword>
<keyword id="KW-1185">Reference proteome</keyword>
<keyword id="KW-0678">Repressor</keyword>
<keyword id="KW-0804">Transcription</keyword>
<keyword id="KW-0805">Transcription regulation</keyword>
<keyword id="KW-0862">Zinc</keyword>
<keyword id="KW-0863">Zinc-finger</keyword>
<proteinExistence type="inferred from homology"/>
<evidence type="ECO:0000250" key="1"/>
<evidence type="ECO:0000255" key="2">
    <source>
        <dbReference type="PROSITE-ProRule" id="PRU00092"/>
    </source>
</evidence>
<evidence type="ECO:0000255" key="3">
    <source>
        <dbReference type="PROSITE-ProRule" id="PRU00723"/>
    </source>
</evidence>
<evidence type="ECO:0000256" key="4">
    <source>
        <dbReference type="SAM" id="MobiDB-lite"/>
    </source>
</evidence>
<sequence length="509" mass="57974">MDEYEAQLLVVKQALLVTSDEQQRDELIALQTNLEELLALTRGSEPEATSDTKTPETSDNIDDELQRFQSELIDLEHQQADPGEDQQRLEELRTKYNGLLGEKCSAPHEHSWGALSYHNALICGVDDELIVDKNGILDVRLRVLFTNPTHREMLPCNYFLEGECRFDEVRCRYSHGALVPGSSIKDYKAPDFHRLARNCSVLAKLQDRLWHRGRVLCVNFVEQQCRVRLDGQEHKERERDFPFEELFPLVTAEDDDLTSESEESNETDGSDAGNDSDMDDFEAARQARMVELSLFTFKPTERLGAWEQYTRGIGSKLMANMGYIHGTGLGSDGRGIVTPVSAQILPQGRSLDACMELREAANGDKDYFSVERKLKRAQRRQEAANEKAYERASKRTDVFAFLNTSVLGQGSQQTENANKKTKPNNLQQHSNKTLNVETVRIADDIRRKQRDIAKVQQSLARNATDAQLQKRLNVQLQAQKQELATLQAQETSLCKEQQTRKSKNKMFEF</sequence>
<feature type="chain" id="PRO_0000385204" description="Zinc finger CCCH-type with G patch domain-containing protein">
    <location>
        <begin position="1"/>
        <end position="509"/>
    </location>
</feature>
<feature type="domain" description="G-patch" evidence="2">
    <location>
        <begin position="310"/>
        <end position="356"/>
    </location>
</feature>
<feature type="zinc finger region" description="C3H1-type" evidence="3">
    <location>
        <begin position="155"/>
        <end position="178"/>
    </location>
</feature>
<feature type="region of interest" description="Disordered" evidence="4">
    <location>
        <begin position="41"/>
        <end position="61"/>
    </location>
</feature>
<feature type="region of interest" description="Disordered" evidence="4">
    <location>
        <begin position="254"/>
        <end position="278"/>
    </location>
</feature>
<feature type="region of interest" description="Disordered" evidence="4">
    <location>
        <begin position="410"/>
        <end position="433"/>
    </location>
</feature>
<feature type="compositionally biased region" description="Polar residues" evidence="4">
    <location>
        <begin position="47"/>
        <end position="58"/>
    </location>
</feature>
<feature type="compositionally biased region" description="Polar residues" evidence="4">
    <location>
        <begin position="423"/>
        <end position="433"/>
    </location>
</feature>
<name>ZGPAT_DROMO</name>
<protein>
    <recommendedName>
        <fullName>Zinc finger CCCH-type with G patch domain-containing protein</fullName>
    </recommendedName>
</protein>
<reference key="1">
    <citation type="journal article" date="2007" name="Nature">
        <title>Evolution of genes and genomes on the Drosophila phylogeny.</title>
        <authorList>
            <consortium name="Drosophila 12 genomes consortium"/>
        </authorList>
    </citation>
    <scope>NUCLEOTIDE SEQUENCE [LARGE SCALE GENOMIC DNA]</scope>
    <source>
        <strain>Tucson 15081-1352.22</strain>
    </source>
</reference>
<gene>
    <name type="ORF">GI17578</name>
</gene>
<accession>B4KH32</accession>